<proteinExistence type="inferred from homology"/>
<accession>A8WTF8</accession>
<protein>
    <recommendedName>
        <fullName evidence="1">FMRFamide-like neuropeptides 16</fullName>
    </recommendedName>
    <component>
        <recommendedName>
            <fullName evidence="1">AQTFVRF-amide 1</fullName>
        </recommendedName>
    </component>
    <component>
        <recommendedName>
            <fullName evidence="1">AQTFVRF-amide 2</fullName>
        </recommendedName>
    </component>
    <component>
        <recommendedName>
            <fullName evidence="1">GQTFVRF-amide</fullName>
        </recommendedName>
    </component>
</protein>
<dbReference type="EMBL" id="HE601438">
    <property type="protein sequence ID" value="CAP23770.3"/>
    <property type="molecule type" value="Genomic_DNA"/>
</dbReference>
<dbReference type="SMR" id="A8WTF8"/>
<dbReference type="FunCoup" id="A8WTF8">
    <property type="interactions" value="1241"/>
</dbReference>
<dbReference type="STRING" id="6238.A8WTF8"/>
<dbReference type="EnsemblMetazoa" id="CBG02820a.1">
    <property type="protein sequence ID" value="CBG02820a.1"/>
    <property type="gene ID" value="WBGene00025799"/>
</dbReference>
<dbReference type="KEGG" id="cbr:CBG_02820"/>
<dbReference type="CTD" id="8572570"/>
<dbReference type="WormBase" id="CBG02820a">
    <property type="protein sequence ID" value="CBP21170"/>
    <property type="gene ID" value="WBGene00025799"/>
    <property type="gene designation" value="Cbr-flp-16"/>
</dbReference>
<dbReference type="eggNOG" id="ENOG502TI12">
    <property type="taxonomic scope" value="Eukaryota"/>
</dbReference>
<dbReference type="HOGENOM" id="CLU_2456864_0_0_1"/>
<dbReference type="InParanoid" id="A8WTF8"/>
<dbReference type="OMA" id="VDYASQY"/>
<dbReference type="Proteomes" id="UP000008549">
    <property type="component" value="Unassembled WGS sequence"/>
</dbReference>
<dbReference type="GO" id="GO:0005576">
    <property type="term" value="C:extracellular region"/>
    <property type="evidence" value="ECO:0007669"/>
    <property type="project" value="UniProtKB-SubCell"/>
</dbReference>
<dbReference type="GO" id="GO:0071244">
    <property type="term" value="P:cellular response to carbon dioxide"/>
    <property type="evidence" value="ECO:0007669"/>
    <property type="project" value="EnsemblMetazoa"/>
</dbReference>
<dbReference type="GO" id="GO:1903745">
    <property type="term" value="P:negative regulation of nematode pharyngeal pumping"/>
    <property type="evidence" value="ECO:0007669"/>
    <property type="project" value="EnsemblMetazoa"/>
</dbReference>
<dbReference type="GO" id="GO:0045988">
    <property type="term" value="P:negative regulation of striated muscle contraction"/>
    <property type="evidence" value="ECO:0000250"/>
    <property type="project" value="UniProtKB"/>
</dbReference>
<dbReference type="GO" id="GO:0007218">
    <property type="term" value="P:neuropeptide signaling pathway"/>
    <property type="evidence" value="ECO:0007669"/>
    <property type="project" value="UniProtKB-KW"/>
</dbReference>
<gene>
    <name type="primary">flp-16</name>
    <name type="ORF">CBG02820</name>
</gene>
<keyword id="KW-0027">Amidation</keyword>
<keyword id="KW-0165">Cleavage on pair of basic residues</keyword>
<keyword id="KW-0527">Neuropeptide</keyword>
<keyword id="KW-1185">Reference proteome</keyword>
<keyword id="KW-0677">Repeat</keyword>
<keyword id="KW-0964">Secreted</keyword>
<keyword id="KW-0732">Signal</keyword>
<organism>
    <name type="scientific">Caenorhabditis briggsae</name>
    <dbReference type="NCBI Taxonomy" id="6238"/>
    <lineage>
        <taxon>Eukaryota</taxon>
        <taxon>Metazoa</taxon>
        <taxon>Ecdysozoa</taxon>
        <taxon>Nematoda</taxon>
        <taxon>Chromadorea</taxon>
        <taxon>Rhabditida</taxon>
        <taxon>Rhabditina</taxon>
        <taxon>Rhabditomorpha</taxon>
        <taxon>Rhabditoidea</taxon>
        <taxon>Rhabditidae</taxon>
        <taxon>Peloderinae</taxon>
        <taxon>Caenorhabditis</taxon>
    </lineage>
</organism>
<sequence length="95" mass="10454">MSLSGFEFSSIIAVLLLLIQLSSAAVLPVDYASQYGVASADEMTALPEEGSLFAERPAKRAQTFVRFGKRAQTFVRFGKRGQTFVRFGRSAPFEQ</sequence>
<evidence type="ECO:0000250" key="1">
    <source>
        <dbReference type="UniProtKB" id="Q7YX32"/>
    </source>
</evidence>
<evidence type="ECO:0000255" key="2"/>
<feature type="signal peptide" evidence="2">
    <location>
        <begin position="1"/>
        <end position="24"/>
    </location>
</feature>
<feature type="propeptide" id="PRO_0000396646" evidence="1">
    <location>
        <begin position="25"/>
        <end position="58"/>
    </location>
</feature>
<feature type="peptide" id="PRO_0000396647" description="AQTFVRF-amide 1" evidence="1">
    <location>
        <begin position="61"/>
        <end position="67"/>
    </location>
</feature>
<feature type="peptide" id="PRO_0000396648" description="AQTFVRF-amide 2" evidence="1">
    <location>
        <begin position="71"/>
        <end position="77"/>
    </location>
</feature>
<feature type="peptide" id="PRO_0000396649" description="GQTFVRF-amide" evidence="1">
    <location>
        <begin position="81"/>
        <end position="87"/>
    </location>
</feature>
<feature type="propeptide" id="PRO_0000396650" evidence="1">
    <location>
        <begin position="90"/>
        <end position="95"/>
    </location>
</feature>
<feature type="modified residue" description="Phenylalanine amide" evidence="1">
    <location>
        <position position="67"/>
    </location>
</feature>
<feature type="modified residue" description="Phenylalanine amide" evidence="1">
    <location>
        <position position="77"/>
    </location>
</feature>
<feature type="modified residue" description="Phenylalanine amide" evidence="1">
    <location>
        <position position="87"/>
    </location>
</feature>
<comment type="function">
    <text evidence="1">FMRFamides and FMRFamide-like peptides are neuropeptides. AQTFVRF-amide inhibits the activity of dissected pharyngeal myogenic muscle system (By similarity).</text>
</comment>
<comment type="subcellular location">
    <subcellularLocation>
        <location evidence="1">Secreted</location>
    </subcellularLocation>
</comment>
<comment type="similarity">
    <text evidence="2">Belongs to the FARP (FMRFamide related peptide) family.</text>
</comment>
<name>FLP16_CAEBR</name>
<reference key="1">
    <citation type="journal article" date="2003" name="PLoS Biol.">
        <title>The genome sequence of Caenorhabditis briggsae: a platform for comparative genomics.</title>
        <authorList>
            <person name="Stein L.D."/>
            <person name="Bao Z."/>
            <person name="Blasiar D."/>
            <person name="Blumenthal T."/>
            <person name="Brent M.R."/>
            <person name="Chen N."/>
            <person name="Chinwalla A."/>
            <person name="Clarke L."/>
            <person name="Clee C."/>
            <person name="Coghlan A."/>
            <person name="Coulson A."/>
            <person name="D'Eustachio P."/>
            <person name="Fitch D.H.A."/>
            <person name="Fulton L.A."/>
            <person name="Fulton R.E."/>
            <person name="Griffiths-Jones S."/>
            <person name="Harris T.W."/>
            <person name="Hillier L.W."/>
            <person name="Kamath R."/>
            <person name="Kuwabara P.E."/>
            <person name="Mardis E.R."/>
            <person name="Marra M.A."/>
            <person name="Miner T.L."/>
            <person name="Minx P."/>
            <person name="Mullikin J.C."/>
            <person name="Plumb R.W."/>
            <person name="Rogers J."/>
            <person name="Schein J.E."/>
            <person name="Sohrmann M."/>
            <person name="Spieth J."/>
            <person name="Stajich J.E."/>
            <person name="Wei C."/>
            <person name="Willey D."/>
            <person name="Wilson R.K."/>
            <person name="Durbin R.M."/>
            <person name="Waterston R.H."/>
        </authorList>
    </citation>
    <scope>NUCLEOTIDE SEQUENCE [LARGE SCALE GENOMIC DNA]</scope>
    <source>
        <strain>AF16</strain>
    </source>
</reference>